<evidence type="ECO:0000255" key="1"/>
<evidence type="ECO:0000255" key="2">
    <source>
        <dbReference type="PROSITE-ProRule" id="PRU00850"/>
    </source>
</evidence>
<evidence type="ECO:0000255" key="3">
    <source>
        <dbReference type="PROSITE-ProRule" id="PRU01025"/>
    </source>
</evidence>
<evidence type="ECO:0000256" key="4">
    <source>
        <dbReference type="SAM" id="MobiDB-lite"/>
    </source>
</evidence>
<evidence type="ECO:0000269" key="5">
    <source>
    </source>
</evidence>
<evidence type="ECO:0000269" key="6">
    <source>
    </source>
</evidence>
<evidence type="ECO:0000305" key="7"/>
<keyword id="KW-0175">Coiled coil</keyword>
<keyword id="KW-0238">DNA-binding</keyword>
<keyword id="KW-0472">Membrane</keyword>
<keyword id="KW-1185">Reference proteome</keyword>
<keyword id="KW-0812">Transmembrane</keyword>
<keyword id="KW-1133">Transmembrane helix</keyword>
<comment type="subcellular location">
    <subcellularLocation>
        <location evidence="7">Membrane</location>
        <topology evidence="7">Single-pass membrane protein</topology>
    </subcellularLocation>
</comment>
<comment type="similarity">
    <text evidence="7">Belongs to the MRF family.</text>
</comment>
<comment type="sequence caution" evidence="7">
    <conflict type="erroneous initiation">
        <sequence resource="EMBL-CDS" id="BAB71571"/>
    </conflict>
    <text>Truncated N-terminus.</text>
</comment>
<gene>
    <name type="primary">MYRFL</name>
    <name type="synonym">C12orf15</name>
    <name type="synonym">C12orf28</name>
</gene>
<feature type="chain" id="PRO_0000252150" description="Myelin regulatory factor-like protein">
    <location>
        <begin position="1"/>
        <end position="910"/>
    </location>
</feature>
<feature type="transmembrane region" description="Helical" evidence="1">
    <location>
        <begin position="628"/>
        <end position="648"/>
    </location>
</feature>
<feature type="domain" description="Peptidase S74" evidence="3">
    <location>
        <begin position="451"/>
        <end position="559"/>
    </location>
</feature>
<feature type="DNA-binding region" description="NDT80" evidence="2">
    <location>
        <begin position="142"/>
        <end position="405"/>
    </location>
</feature>
<feature type="region of interest" description="Disordered" evidence="4">
    <location>
        <begin position="189"/>
        <end position="208"/>
    </location>
</feature>
<feature type="region of interest" description="Disordered" evidence="4">
    <location>
        <begin position="661"/>
        <end position="682"/>
    </location>
</feature>
<feature type="coiled-coil region" evidence="1">
    <location>
        <begin position="543"/>
        <end position="575"/>
    </location>
</feature>
<feature type="compositionally biased region" description="Polar residues" evidence="4">
    <location>
        <begin position="663"/>
        <end position="682"/>
    </location>
</feature>
<feature type="sequence variant" id="VAR_033742" description="In dbSNP:rs35051828.">
    <original>S</original>
    <variation>L</variation>
    <location>
        <position position="723"/>
    </location>
</feature>
<feature type="sequence variant" id="VAR_027780" description="In dbSNP:rs11177991.">
    <original>A</original>
    <variation>S</variation>
    <location>
        <position position="753"/>
    </location>
</feature>
<feature type="sequence variant" id="VAR_069018" description="In dbSNP:rs10879065." evidence="5 6">
    <original>L</original>
    <variation>M</variation>
    <location>
        <position position="845"/>
    </location>
</feature>
<organism>
    <name type="scientific">Homo sapiens</name>
    <name type="common">Human</name>
    <dbReference type="NCBI Taxonomy" id="9606"/>
    <lineage>
        <taxon>Eukaryota</taxon>
        <taxon>Metazoa</taxon>
        <taxon>Chordata</taxon>
        <taxon>Craniata</taxon>
        <taxon>Vertebrata</taxon>
        <taxon>Euteleostomi</taxon>
        <taxon>Mammalia</taxon>
        <taxon>Eutheria</taxon>
        <taxon>Euarchontoglires</taxon>
        <taxon>Primates</taxon>
        <taxon>Haplorrhini</taxon>
        <taxon>Catarrhini</taxon>
        <taxon>Hominidae</taxon>
        <taxon>Homo</taxon>
    </lineage>
</organism>
<accession>Q96LU7</accession>
<dbReference type="EMBL" id="AC025263">
    <property type="status" value="NOT_ANNOTATED_CDS"/>
    <property type="molecule type" value="Genomic_DNA"/>
</dbReference>
<dbReference type="EMBL" id="AC078922">
    <property type="status" value="NOT_ANNOTATED_CDS"/>
    <property type="molecule type" value="Genomic_DNA"/>
</dbReference>
<dbReference type="EMBL" id="AK057785">
    <property type="protein sequence ID" value="BAB71571.1"/>
    <property type="status" value="ALT_INIT"/>
    <property type="molecule type" value="mRNA"/>
</dbReference>
<dbReference type="EMBL" id="BC101820">
    <property type="protein sequence ID" value="AAI01821.2"/>
    <property type="molecule type" value="mRNA"/>
</dbReference>
<dbReference type="CCDS" id="CCDS76577.1"/>
<dbReference type="RefSeq" id="NP_872336.2">
    <property type="nucleotide sequence ID" value="NM_182530.3"/>
</dbReference>
<dbReference type="SMR" id="Q96LU7"/>
<dbReference type="FunCoup" id="Q96LU7">
    <property type="interactions" value="155"/>
</dbReference>
<dbReference type="STRING" id="9606.ENSP00000448753"/>
<dbReference type="GlyGen" id="Q96LU7">
    <property type="glycosylation" value="1 site, 1 O-linked glycan (1 site)"/>
</dbReference>
<dbReference type="iPTMnet" id="Q96LU7"/>
<dbReference type="PhosphoSitePlus" id="Q96LU7"/>
<dbReference type="SwissPalm" id="Q96LU7"/>
<dbReference type="BioMuta" id="MYRFL"/>
<dbReference type="DMDM" id="449081266"/>
<dbReference type="jPOST" id="Q96LU7"/>
<dbReference type="MassIVE" id="Q96LU7"/>
<dbReference type="PaxDb" id="9606-ENSP00000440626"/>
<dbReference type="PeptideAtlas" id="Q96LU7"/>
<dbReference type="ProteomicsDB" id="77252"/>
<dbReference type="Antibodypedia" id="62193">
    <property type="antibodies" value="5 antibodies from 5 providers"/>
</dbReference>
<dbReference type="DNASU" id="196446"/>
<dbReference type="Ensembl" id="ENST00000552032.7">
    <property type="protein sequence ID" value="ENSP00000448753.2"/>
    <property type="gene ID" value="ENSG00000166268.11"/>
</dbReference>
<dbReference type="GeneID" id="196446"/>
<dbReference type="KEGG" id="hsa:196446"/>
<dbReference type="MANE-Select" id="ENST00000552032.7">
    <property type="protein sequence ID" value="ENSP00000448753.2"/>
    <property type="RefSeq nucleotide sequence ID" value="NM_182530.3"/>
    <property type="RefSeq protein sequence ID" value="NP_872336.2"/>
</dbReference>
<dbReference type="UCSC" id="uc001svu.2">
    <property type="organism name" value="human"/>
</dbReference>
<dbReference type="AGR" id="HGNC:26316"/>
<dbReference type="CTD" id="196446"/>
<dbReference type="DisGeNET" id="196446"/>
<dbReference type="GeneCards" id="MYRFL"/>
<dbReference type="HGNC" id="HGNC:26316">
    <property type="gene designation" value="MYRFL"/>
</dbReference>
<dbReference type="HPA" id="ENSG00000166268">
    <property type="expression patterns" value="Tissue enriched (intestine)"/>
</dbReference>
<dbReference type="neXtProt" id="NX_Q96LU7"/>
<dbReference type="OpenTargets" id="ENSG00000166268"/>
<dbReference type="VEuPathDB" id="HostDB:ENSG00000166268"/>
<dbReference type="eggNOG" id="KOG3661">
    <property type="taxonomic scope" value="Eukaryota"/>
</dbReference>
<dbReference type="GeneTree" id="ENSGT00530000063626"/>
<dbReference type="HOGENOM" id="CLU_004919_1_0_1"/>
<dbReference type="InParanoid" id="Q96LU7"/>
<dbReference type="OMA" id="CHNPGAS"/>
<dbReference type="OrthoDB" id="27041at2759"/>
<dbReference type="PAN-GO" id="Q96LU7">
    <property type="GO annotations" value="6 GO annotations based on evolutionary models"/>
</dbReference>
<dbReference type="PhylomeDB" id="Q96LU7"/>
<dbReference type="PathwayCommons" id="Q96LU7"/>
<dbReference type="SignaLink" id="Q96LU7"/>
<dbReference type="BioGRID-ORCS" id="196446">
    <property type="hits" value="1 hit in 182 CRISPR screens"/>
</dbReference>
<dbReference type="ChiTaRS" id="MYRFL">
    <property type="organism name" value="human"/>
</dbReference>
<dbReference type="GenomeRNAi" id="196446"/>
<dbReference type="Pharos" id="Q96LU7">
    <property type="development level" value="Tdark"/>
</dbReference>
<dbReference type="PRO" id="PR:Q96LU7"/>
<dbReference type="Proteomes" id="UP000005640">
    <property type="component" value="Chromosome 12"/>
</dbReference>
<dbReference type="RNAct" id="Q96LU7">
    <property type="molecule type" value="protein"/>
</dbReference>
<dbReference type="Bgee" id="ENSG00000166268">
    <property type="expression patterns" value="Expressed in primordial germ cell in gonad and 106 other cell types or tissues"/>
</dbReference>
<dbReference type="ExpressionAtlas" id="Q96LU7">
    <property type="expression patterns" value="baseline and differential"/>
</dbReference>
<dbReference type="GO" id="GO:0005789">
    <property type="term" value="C:endoplasmic reticulum membrane"/>
    <property type="evidence" value="ECO:0000318"/>
    <property type="project" value="GO_Central"/>
</dbReference>
<dbReference type="GO" id="GO:0005634">
    <property type="term" value="C:nucleus"/>
    <property type="evidence" value="ECO:0000318"/>
    <property type="project" value="GO_Central"/>
</dbReference>
<dbReference type="GO" id="GO:0003700">
    <property type="term" value="F:DNA-binding transcription factor activity"/>
    <property type="evidence" value="ECO:0000318"/>
    <property type="project" value="GO_Central"/>
</dbReference>
<dbReference type="GO" id="GO:0043565">
    <property type="term" value="F:sequence-specific DNA binding"/>
    <property type="evidence" value="ECO:0000318"/>
    <property type="project" value="GO_Central"/>
</dbReference>
<dbReference type="GO" id="GO:0045893">
    <property type="term" value="P:positive regulation of DNA-templated transcription"/>
    <property type="evidence" value="ECO:0000318"/>
    <property type="project" value="GO_Central"/>
</dbReference>
<dbReference type="GO" id="GO:0016540">
    <property type="term" value="P:protein autoprocessing"/>
    <property type="evidence" value="ECO:0000318"/>
    <property type="project" value="GO_Central"/>
</dbReference>
<dbReference type="FunFam" id="2.60.40.1390:FF:000009">
    <property type="entry name" value="Myelin regulatory factor like"/>
    <property type="match status" value="1"/>
</dbReference>
<dbReference type="Gene3D" id="2.60.40.1390">
    <property type="entry name" value="NDT80 DNA-binding domain"/>
    <property type="match status" value="1"/>
</dbReference>
<dbReference type="InterPro" id="IPR051577">
    <property type="entry name" value="MRF-like"/>
</dbReference>
<dbReference type="InterPro" id="IPR025719">
    <property type="entry name" value="MYRF_C2"/>
</dbReference>
<dbReference type="InterPro" id="IPR026932">
    <property type="entry name" value="MYRF_ICA"/>
</dbReference>
<dbReference type="InterPro" id="IPR024061">
    <property type="entry name" value="NDT80_DNA-bd_dom"/>
</dbReference>
<dbReference type="InterPro" id="IPR037141">
    <property type="entry name" value="NDT80_DNA-bd_dom_sf"/>
</dbReference>
<dbReference type="InterPro" id="IPR008967">
    <property type="entry name" value="p53-like_TF_DNA-bd_sf"/>
</dbReference>
<dbReference type="InterPro" id="IPR030392">
    <property type="entry name" value="S74_ICA"/>
</dbReference>
<dbReference type="PANTHER" id="PTHR13029">
    <property type="match status" value="1"/>
</dbReference>
<dbReference type="PANTHER" id="PTHR13029:SF17">
    <property type="entry name" value="MYELIN REGULATORY FACTOR-LIKE PROTEIN"/>
    <property type="match status" value="1"/>
</dbReference>
<dbReference type="Pfam" id="PF13888">
    <property type="entry name" value="MRF_C2"/>
    <property type="match status" value="1"/>
</dbReference>
<dbReference type="Pfam" id="PF13887">
    <property type="entry name" value="MYRF_ICA"/>
    <property type="match status" value="1"/>
</dbReference>
<dbReference type="Pfam" id="PF05224">
    <property type="entry name" value="NDT80_PhoG"/>
    <property type="match status" value="1"/>
</dbReference>
<dbReference type="Pfam" id="PF13884">
    <property type="entry name" value="Peptidase_S74"/>
    <property type="match status" value="1"/>
</dbReference>
<dbReference type="SUPFAM" id="SSF49417">
    <property type="entry name" value="p53-like transcription factors"/>
    <property type="match status" value="1"/>
</dbReference>
<dbReference type="PROSITE" id="PS51688">
    <property type="entry name" value="ICA"/>
    <property type="match status" value="1"/>
</dbReference>
<dbReference type="PROSITE" id="PS51517">
    <property type="entry name" value="NDT80"/>
    <property type="match status" value="1"/>
</dbReference>
<sequence>MDVVGENEALQQFFEAQGANGTLENPALDTSLLEEFLGNDFDLGALQRQLPDTPPYSASDSCSPPQVKGACYPTLRPTAGRTPAPFLHPTAAPAMPPMHPLQSTSGMGDSCQIHGGFHSCHSNASHLATPLDQSVSSHLGIGCSYPQQPLCHSPGASLPPTKKRKCTQALEDSGECRVWACHCRPMTSRSRSSEVQDPDSEGQNRMPTDQCSPALKWQPCHSVPWHSLLNSHYEKLPDVGYRVVTDKGFNFSPADEAFVCQKKNHFQITIHIQVWGSPKFVETEMGLKPIEMFYLKVFGTKVEATNQIIAIEQSQADRSKKIFNPVKIDLLADQVTKVTLGRLHFSETTANNMRKKGKPNPDQRYFMLVVGLYAANQDQFYLLSAHISERIIVRASNPGQFENDSDALWQRGQVPESIVCHGRVGINTDAPDEALVVCGNMKVMGTIMHPSDSRAKQNIQEVDTNEQLKRIAQMRIVEYDYKPEFASAMGINTAHQTGMIAQEVQEILPRAVREVGDVTCGNGETLENFLMVDKDQIFMENVGAVKQLCKLTNNLEERIEELEIWNRKLARLKRLSSWKSSASEASTISKSSRAVSASSPRRAVHKKNNKVYFSGKRQACPNWVFQTLVITLIAVMAFCALTIVALYILSLKDQDRRVPNLPPSNITSSQEPALLPTASSSAPNTSLVTTPASLQVPEITFCEILPCQETYCCPIRGMKEVSSSPVQRQSEEKEFHQRRWSEDKSKSVLARNALSGPDWESDWIDTTISSIQIMEIQQIIDHQYCIQSLQCGSGNYNYNIPVNKHTPTNVKFSLEINTTEPLIVFQCKFTLGNICFHSKRGTKGLESHREISQEMTQGYQHIWSLPVAPFSDSMFHFRVAAPDLADCSTDPYFAGIFFTDYFFYFYRRCA</sequence>
<protein>
    <recommendedName>
        <fullName>Myelin regulatory factor-like protein</fullName>
    </recommendedName>
</protein>
<proteinExistence type="evidence at transcript level"/>
<name>MRFL_HUMAN</name>
<reference key="1">
    <citation type="journal article" date="2006" name="Nature">
        <title>The finished DNA sequence of human chromosome 12.</title>
        <authorList>
            <person name="Scherer S.E."/>
            <person name="Muzny D.M."/>
            <person name="Buhay C.J."/>
            <person name="Chen R."/>
            <person name="Cree A."/>
            <person name="Ding Y."/>
            <person name="Dugan-Rocha S."/>
            <person name="Gill R."/>
            <person name="Gunaratne P."/>
            <person name="Harris R.A."/>
            <person name="Hawes A.C."/>
            <person name="Hernandez J."/>
            <person name="Hodgson A.V."/>
            <person name="Hume J."/>
            <person name="Jackson A."/>
            <person name="Khan Z.M."/>
            <person name="Kovar-Smith C."/>
            <person name="Lewis L.R."/>
            <person name="Lozado R.J."/>
            <person name="Metzker M.L."/>
            <person name="Milosavljevic A."/>
            <person name="Miner G.R."/>
            <person name="Montgomery K.T."/>
            <person name="Morgan M.B."/>
            <person name="Nazareth L.V."/>
            <person name="Scott G."/>
            <person name="Sodergren E."/>
            <person name="Song X.-Z."/>
            <person name="Steffen D."/>
            <person name="Lovering R.C."/>
            <person name="Wheeler D.A."/>
            <person name="Worley K.C."/>
            <person name="Yuan Y."/>
            <person name="Zhang Z."/>
            <person name="Adams C.Q."/>
            <person name="Ansari-Lari M.A."/>
            <person name="Ayele M."/>
            <person name="Brown M.J."/>
            <person name="Chen G."/>
            <person name="Chen Z."/>
            <person name="Clerc-Blankenburg K.P."/>
            <person name="Davis C."/>
            <person name="Delgado O."/>
            <person name="Dinh H.H."/>
            <person name="Draper H."/>
            <person name="Gonzalez-Garay M.L."/>
            <person name="Havlak P."/>
            <person name="Jackson L.R."/>
            <person name="Jacob L.S."/>
            <person name="Kelly S.H."/>
            <person name="Li L."/>
            <person name="Li Z."/>
            <person name="Liu J."/>
            <person name="Liu W."/>
            <person name="Lu J."/>
            <person name="Maheshwari M."/>
            <person name="Nguyen B.-V."/>
            <person name="Okwuonu G.O."/>
            <person name="Pasternak S."/>
            <person name="Perez L.M."/>
            <person name="Plopper F.J.H."/>
            <person name="Santibanez J."/>
            <person name="Shen H."/>
            <person name="Tabor P.E."/>
            <person name="Verduzco D."/>
            <person name="Waldron L."/>
            <person name="Wang Q."/>
            <person name="Williams G.A."/>
            <person name="Zhang J."/>
            <person name="Zhou J."/>
            <person name="Allen C.C."/>
            <person name="Amin A.G."/>
            <person name="Anyalebechi V."/>
            <person name="Bailey M."/>
            <person name="Barbaria J.A."/>
            <person name="Bimage K.E."/>
            <person name="Bryant N.P."/>
            <person name="Burch P.E."/>
            <person name="Burkett C.E."/>
            <person name="Burrell K.L."/>
            <person name="Calderon E."/>
            <person name="Cardenas V."/>
            <person name="Carter K."/>
            <person name="Casias K."/>
            <person name="Cavazos I."/>
            <person name="Cavazos S.R."/>
            <person name="Ceasar H."/>
            <person name="Chacko J."/>
            <person name="Chan S.N."/>
            <person name="Chavez D."/>
            <person name="Christopoulos C."/>
            <person name="Chu J."/>
            <person name="Cockrell R."/>
            <person name="Cox C.D."/>
            <person name="Dang M."/>
            <person name="Dathorne S.R."/>
            <person name="David R."/>
            <person name="Davis C.M."/>
            <person name="Davy-Carroll L."/>
            <person name="Deshazo D.R."/>
            <person name="Donlin J.E."/>
            <person name="D'Souza L."/>
            <person name="Eaves K.A."/>
            <person name="Egan A."/>
            <person name="Emery-Cohen A.J."/>
            <person name="Escotto M."/>
            <person name="Flagg N."/>
            <person name="Forbes L.D."/>
            <person name="Gabisi A.M."/>
            <person name="Garza M."/>
            <person name="Hamilton C."/>
            <person name="Henderson N."/>
            <person name="Hernandez O."/>
            <person name="Hines S."/>
            <person name="Hogues M.E."/>
            <person name="Huang M."/>
            <person name="Idlebird D.G."/>
            <person name="Johnson R."/>
            <person name="Jolivet A."/>
            <person name="Jones S."/>
            <person name="Kagan R."/>
            <person name="King L.M."/>
            <person name="Leal B."/>
            <person name="Lebow H."/>
            <person name="Lee S."/>
            <person name="LeVan J.M."/>
            <person name="Lewis L.C."/>
            <person name="London P."/>
            <person name="Lorensuhewa L.M."/>
            <person name="Loulseged H."/>
            <person name="Lovett D.A."/>
            <person name="Lucier A."/>
            <person name="Lucier R.L."/>
            <person name="Ma J."/>
            <person name="Madu R.C."/>
            <person name="Mapua P."/>
            <person name="Martindale A.D."/>
            <person name="Martinez E."/>
            <person name="Massey E."/>
            <person name="Mawhiney S."/>
            <person name="Meador M.G."/>
            <person name="Mendez S."/>
            <person name="Mercado C."/>
            <person name="Mercado I.C."/>
            <person name="Merritt C.E."/>
            <person name="Miner Z.L."/>
            <person name="Minja E."/>
            <person name="Mitchell T."/>
            <person name="Mohabbat F."/>
            <person name="Mohabbat K."/>
            <person name="Montgomery B."/>
            <person name="Moore N."/>
            <person name="Morris S."/>
            <person name="Munidasa M."/>
            <person name="Ngo R.N."/>
            <person name="Nguyen N.B."/>
            <person name="Nickerson E."/>
            <person name="Nwaokelemeh O.O."/>
            <person name="Nwokenkwo S."/>
            <person name="Obregon M."/>
            <person name="Oguh M."/>
            <person name="Oragunye N."/>
            <person name="Oviedo R.J."/>
            <person name="Parish B.J."/>
            <person name="Parker D.N."/>
            <person name="Parrish J."/>
            <person name="Parks K.L."/>
            <person name="Paul H.A."/>
            <person name="Payton B.A."/>
            <person name="Perez A."/>
            <person name="Perrin W."/>
            <person name="Pickens A."/>
            <person name="Primus E.L."/>
            <person name="Pu L.-L."/>
            <person name="Puazo M."/>
            <person name="Quiles M.M."/>
            <person name="Quiroz J.B."/>
            <person name="Rabata D."/>
            <person name="Reeves K."/>
            <person name="Ruiz S.J."/>
            <person name="Shao H."/>
            <person name="Sisson I."/>
            <person name="Sonaike T."/>
            <person name="Sorelle R.P."/>
            <person name="Sutton A.E."/>
            <person name="Svatek A.F."/>
            <person name="Svetz L.A."/>
            <person name="Tamerisa K.S."/>
            <person name="Taylor T.R."/>
            <person name="Teague B."/>
            <person name="Thomas N."/>
            <person name="Thorn R.D."/>
            <person name="Trejos Z.Y."/>
            <person name="Trevino B.K."/>
            <person name="Ukegbu O.N."/>
            <person name="Urban J.B."/>
            <person name="Vasquez L.I."/>
            <person name="Vera V.A."/>
            <person name="Villasana D.M."/>
            <person name="Wang L."/>
            <person name="Ward-Moore S."/>
            <person name="Warren J.T."/>
            <person name="Wei X."/>
            <person name="White F."/>
            <person name="Williamson A.L."/>
            <person name="Wleczyk R."/>
            <person name="Wooden H.S."/>
            <person name="Wooden S.H."/>
            <person name="Yen J."/>
            <person name="Yoon L."/>
            <person name="Yoon V."/>
            <person name="Zorrilla S.E."/>
            <person name="Nelson D."/>
            <person name="Kucherlapati R."/>
            <person name="Weinstock G."/>
            <person name="Gibbs R.A."/>
        </authorList>
    </citation>
    <scope>NUCLEOTIDE SEQUENCE [LARGE SCALE GENOMIC DNA]</scope>
</reference>
<reference key="2">
    <citation type="journal article" date="2004" name="Nat. Genet.">
        <title>Complete sequencing and characterization of 21,243 full-length human cDNAs.</title>
        <authorList>
            <person name="Ota T."/>
            <person name="Suzuki Y."/>
            <person name="Nishikawa T."/>
            <person name="Otsuki T."/>
            <person name="Sugiyama T."/>
            <person name="Irie R."/>
            <person name="Wakamatsu A."/>
            <person name="Hayashi K."/>
            <person name="Sato H."/>
            <person name="Nagai K."/>
            <person name="Kimura K."/>
            <person name="Makita H."/>
            <person name="Sekine M."/>
            <person name="Obayashi M."/>
            <person name="Nishi T."/>
            <person name="Shibahara T."/>
            <person name="Tanaka T."/>
            <person name="Ishii S."/>
            <person name="Yamamoto J."/>
            <person name="Saito K."/>
            <person name="Kawai Y."/>
            <person name="Isono Y."/>
            <person name="Nakamura Y."/>
            <person name="Nagahari K."/>
            <person name="Murakami K."/>
            <person name="Yasuda T."/>
            <person name="Iwayanagi T."/>
            <person name="Wagatsuma M."/>
            <person name="Shiratori A."/>
            <person name="Sudo H."/>
            <person name="Hosoiri T."/>
            <person name="Kaku Y."/>
            <person name="Kodaira H."/>
            <person name="Kondo H."/>
            <person name="Sugawara M."/>
            <person name="Takahashi M."/>
            <person name="Kanda K."/>
            <person name="Yokoi T."/>
            <person name="Furuya T."/>
            <person name="Kikkawa E."/>
            <person name="Omura Y."/>
            <person name="Abe K."/>
            <person name="Kamihara K."/>
            <person name="Katsuta N."/>
            <person name="Sato K."/>
            <person name="Tanikawa M."/>
            <person name="Yamazaki M."/>
            <person name="Ninomiya K."/>
            <person name="Ishibashi T."/>
            <person name="Yamashita H."/>
            <person name="Murakawa K."/>
            <person name="Fujimori K."/>
            <person name="Tanai H."/>
            <person name="Kimata M."/>
            <person name="Watanabe M."/>
            <person name="Hiraoka S."/>
            <person name="Chiba Y."/>
            <person name="Ishida S."/>
            <person name="Ono Y."/>
            <person name="Takiguchi S."/>
            <person name="Watanabe S."/>
            <person name="Yosida M."/>
            <person name="Hotuta T."/>
            <person name="Kusano J."/>
            <person name="Kanehori K."/>
            <person name="Takahashi-Fujii A."/>
            <person name="Hara H."/>
            <person name="Tanase T.-O."/>
            <person name="Nomura Y."/>
            <person name="Togiya S."/>
            <person name="Komai F."/>
            <person name="Hara R."/>
            <person name="Takeuchi K."/>
            <person name="Arita M."/>
            <person name="Imose N."/>
            <person name="Musashino K."/>
            <person name="Yuuki H."/>
            <person name="Oshima A."/>
            <person name="Sasaki N."/>
            <person name="Aotsuka S."/>
            <person name="Yoshikawa Y."/>
            <person name="Matsunawa H."/>
            <person name="Ichihara T."/>
            <person name="Shiohata N."/>
            <person name="Sano S."/>
            <person name="Moriya S."/>
            <person name="Momiyama H."/>
            <person name="Satoh N."/>
            <person name="Takami S."/>
            <person name="Terashima Y."/>
            <person name="Suzuki O."/>
            <person name="Nakagawa S."/>
            <person name="Senoh A."/>
            <person name="Mizoguchi H."/>
            <person name="Goto Y."/>
            <person name="Shimizu F."/>
            <person name="Wakebe H."/>
            <person name="Hishigaki H."/>
            <person name="Watanabe T."/>
            <person name="Sugiyama A."/>
            <person name="Takemoto M."/>
            <person name="Kawakami B."/>
            <person name="Yamazaki M."/>
            <person name="Watanabe K."/>
            <person name="Kumagai A."/>
            <person name="Itakura S."/>
            <person name="Fukuzumi Y."/>
            <person name="Fujimori Y."/>
            <person name="Komiyama M."/>
            <person name="Tashiro H."/>
            <person name="Tanigami A."/>
            <person name="Fujiwara T."/>
            <person name="Ono T."/>
            <person name="Yamada K."/>
            <person name="Fujii Y."/>
            <person name="Ozaki K."/>
            <person name="Hirao M."/>
            <person name="Ohmori Y."/>
            <person name="Kawabata A."/>
            <person name="Hikiji T."/>
            <person name="Kobatake N."/>
            <person name="Inagaki H."/>
            <person name="Ikema Y."/>
            <person name="Okamoto S."/>
            <person name="Okitani R."/>
            <person name="Kawakami T."/>
            <person name="Noguchi S."/>
            <person name="Itoh T."/>
            <person name="Shigeta K."/>
            <person name="Senba T."/>
            <person name="Matsumura K."/>
            <person name="Nakajima Y."/>
            <person name="Mizuno T."/>
            <person name="Morinaga M."/>
            <person name="Sasaki M."/>
            <person name="Togashi T."/>
            <person name="Oyama M."/>
            <person name="Hata H."/>
            <person name="Watanabe M."/>
            <person name="Komatsu T."/>
            <person name="Mizushima-Sugano J."/>
            <person name="Satoh T."/>
            <person name="Shirai Y."/>
            <person name="Takahashi Y."/>
            <person name="Nakagawa K."/>
            <person name="Okumura K."/>
            <person name="Nagase T."/>
            <person name="Nomura N."/>
            <person name="Kikuchi H."/>
            <person name="Masuho Y."/>
            <person name="Yamashita R."/>
            <person name="Nakai K."/>
            <person name="Yada T."/>
            <person name="Nakamura Y."/>
            <person name="Ohara O."/>
            <person name="Isogai T."/>
            <person name="Sugano S."/>
        </authorList>
    </citation>
    <scope>NUCLEOTIDE SEQUENCE [LARGE SCALE MRNA] OF 564-910</scope>
    <scope>VARIANT MET-845</scope>
    <source>
        <tissue>Cerebellum</tissue>
    </source>
</reference>
<reference key="3">
    <citation type="journal article" date="2004" name="Genome Res.">
        <title>The status, quality, and expansion of the NIH full-length cDNA project: the Mammalian Gene Collection (MGC).</title>
        <authorList>
            <consortium name="The MGC Project Team"/>
        </authorList>
    </citation>
    <scope>NUCLEOTIDE SEQUENCE [LARGE SCALE MRNA] OF 619-910</scope>
    <scope>VARIANT MET-845</scope>
    <source>
        <tissue>Brain</tissue>
    </source>
</reference>